<gene>
    <name evidence="1" type="primary">ybeY</name>
    <name type="ordered locus">Plut_1354</name>
</gene>
<sequence length="137" mass="16191">MQLQIHNTTRRKLDDALLCRAVETVIQGEGRHALEIAAVYCGSRMSRRINREYLQHDWPTDTISFPYGSGGNVEGEFYICLDVIEENARRFNTDFERELFRVTIHSVLHLAGYDDHLPEDRRRMTEREDSYLQQLFR</sequence>
<accession>Q3B368</accession>
<comment type="function">
    <text evidence="1">Single strand-specific metallo-endoribonuclease involved in late-stage 70S ribosome quality control and in maturation of the 3' terminus of the 16S rRNA.</text>
</comment>
<comment type="cofactor">
    <cofactor evidence="1">
        <name>Zn(2+)</name>
        <dbReference type="ChEBI" id="CHEBI:29105"/>
    </cofactor>
    <text evidence="1">Binds 1 zinc ion.</text>
</comment>
<comment type="subcellular location">
    <subcellularLocation>
        <location evidence="1">Cytoplasm</location>
    </subcellularLocation>
</comment>
<comment type="similarity">
    <text evidence="1">Belongs to the endoribonuclease YbeY family.</text>
</comment>
<feature type="chain" id="PRO_0000284266" description="Endoribonuclease YbeY">
    <location>
        <begin position="1"/>
        <end position="137"/>
    </location>
</feature>
<feature type="binding site" evidence="1">
    <location>
        <position position="105"/>
    </location>
    <ligand>
        <name>Zn(2+)</name>
        <dbReference type="ChEBI" id="CHEBI:29105"/>
        <note>catalytic</note>
    </ligand>
</feature>
<feature type="binding site" evidence="1">
    <location>
        <position position="109"/>
    </location>
    <ligand>
        <name>Zn(2+)</name>
        <dbReference type="ChEBI" id="CHEBI:29105"/>
        <note>catalytic</note>
    </ligand>
</feature>
<feature type="binding site" evidence="1">
    <location>
        <position position="115"/>
    </location>
    <ligand>
        <name>Zn(2+)</name>
        <dbReference type="ChEBI" id="CHEBI:29105"/>
        <note>catalytic</note>
    </ligand>
</feature>
<name>YBEY_CHLL3</name>
<dbReference type="EC" id="3.1.-.-" evidence="1"/>
<dbReference type="EMBL" id="CP000096">
    <property type="protein sequence ID" value="ABB24213.1"/>
    <property type="molecule type" value="Genomic_DNA"/>
</dbReference>
<dbReference type="RefSeq" id="WP_011358085.1">
    <property type="nucleotide sequence ID" value="NC_007512.1"/>
</dbReference>
<dbReference type="SMR" id="Q3B368"/>
<dbReference type="STRING" id="319225.Plut_1354"/>
<dbReference type="KEGG" id="plt:Plut_1354"/>
<dbReference type="eggNOG" id="COG0319">
    <property type="taxonomic scope" value="Bacteria"/>
</dbReference>
<dbReference type="HOGENOM" id="CLU_106710_3_3_10"/>
<dbReference type="OrthoDB" id="9811984at2"/>
<dbReference type="Proteomes" id="UP000002709">
    <property type="component" value="Chromosome"/>
</dbReference>
<dbReference type="GO" id="GO:0005737">
    <property type="term" value="C:cytoplasm"/>
    <property type="evidence" value="ECO:0007669"/>
    <property type="project" value="UniProtKB-SubCell"/>
</dbReference>
<dbReference type="GO" id="GO:0004222">
    <property type="term" value="F:metalloendopeptidase activity"/>
    <property type="evidence" value="ECO:0007669"/>
    <property type="project" value="InterPro"/>
</dbReference>
<dbReference type="GO" id="GO:0004521">
    <property type="term" value="F:RNA endonuclease activity"/>
    <property type="evidence" value="ECO:0007669"/>
    <property type="project" value="UniProtKB-UniRule"/>
</dbReference>
<dbReference type="GO" id="GO:0008270">
    <property type="term" value="F:zinc ion binding"/>
    <property type="evidence" value="ECO:0007669"/>
    <property type="project" value="UniProtKB-UniRule"/>
</dbReference>
<dbReference type="GO" id="GO:0006364">
    <property type="term" value="P:rRNA processing"/>
    <property type="evidence" value="ECO:0007669"/>
    <property type="project" value="UniProtKB-UniRule"/>
</dbReference>
<dbReference type="Gene3D" id="3.40.390.30">
    <property type="entry name" value="Metalloproteases ('zincins'), catalytic domain"/>
    <property type="match status" value="1"/>
</dbReference>
<dbReference type="HAMAP" id="MF_00009">
    <property type="entry name" value="Endoribonucl_YbeY"/>
    <property type="match status" value="1"/>
</dbReference>
<dbReference type="InterPro" id="IPR023091">
    <property type="entry name" value="MetalPrtase_cat_dom_sf_prd"/>
</dbReference>
<dbReference type="InterPro" id="IPR002036">
    <property type="entry name" value="YbeY"/>
</dbReference>
<dbReference type="InterPro" id="IPR020549">
    <property type="entry name" value="YbeY_CS"/>
</dbReference>
<dbReference type="NCBIfam" id="TIGR00043">
    <property type="entry name" value="rRNA maturation RNase YbeY"/>
    <property type="match status" value="1"/>
</dbReference>
<dbReference type="PANTHER" id="PTHR46986">
    <property type="entry name" value="ENDORIBONUCLEASE YBEY, CHLOROPLASTIC"/>
    <property type="match status" value="1"/>
</dbReference>
<dbReference type="PANTHER" id="PTHR46986:SF1">
    <property type="entry name" value="ENDORIBONUCLEASE YBEY, CHLOROPLASTIC"/>
    <property type="match status" value="1"/>
</dbReference>
<dbReference type="Pfam" id="PF02130">
    <property type="entry name" value="YbeY"/>
    <property type="match status" value="1"/>
</dbReference>
<dbReference type="SUPFAM" id="SSF55486">
    <property type="entry name" value="Metalloproteases ('zincins'), catalytic domain"/>
    <property type="match status" value="1"/>
</dbReference>
<dbReference type="PROSITE" id="PS01306">
    <property type="entry name" value="UPF0054"/>
    <property type="match status" value="1"/>
</dbReference>
<keyword id="KW-0963">Cytoplasm</keyword>
<keyword id="KW-0255">Endonuclease</keyword>
<keyword id="KW-0378">Hydrolase</keyword>
<keyword id="KW-0479">Metal-binding</keyword>
<keyword id="KW-0540">Nuclease</keyword>
<keyword id="KW-1185">Reference proteome</keyword>
<keyword id="KW-0690">Ribosome biogenesis</keyword>
<keyword id="KW-0698">rRNA processing</keyword>
<keyword id="KW-0862">Zinc</keyword>
<organism>
    <name type="scientific">Chlorobium luteolum (strain DSM 273 / BCRC 81028 / 2530)</name>
    <name type="common">Pelodictyon luteolum</name>
    <dbReference type="NCBI Taxonomy" id="319225"/>
    <lineage>
        <taxon>Bacteria</taxon>
        <taxon>Pseudomonadati</taxon>
        <taxon>Chlorobiota</taxon>
        <taxon>Chlorobiia</taxon>
        <taxon>Chlorobiales</taxon>
        <taxon>Chlorobiaceae</taxon>
        <taxon>Chlorobium/Pelodictyon group</taxon>
        <taxon>Pelodictyon</taxon>
    </lineage>
</organism>
<protein>
    <recommendedName>
        <fullName evidence="1">Endoribonuclease YbeY</fullName>
        <ecNumber evidence="1">3.1.-.-</ecNumber>
    </recommendedName>
</protein>
<reference key="1">
    <citation type="submission" date="2005-08" db="EMBL/GenBank/DDBJ databases">
        <title>Complete sequence of Pelodictyon luteolum DSM 273.</title>
        <authorList>
            <consortium name="US DOE Joint Genome Institute"/>
            <person name="Copeland A."/>
            <person name="Lucas S."/>
            <person name="Lapidus A."/>
            <person name="Barry K."/>
            <person name="Detter J.C."/>
            <person name="Glavina T."/>
            <person name="Hammon N."/>
            <person name="Israni S."/>
            <person name="Pitluck S."/>
            <person name="Bryant D."/>
            <person name="Schmutz J."/>
            <person name="Larimer F."/>
            <person name="Land M."/>
            <person name="Kyrpides N."/>
            <person name="Ivanova N."/>
            <person name="Richardson P."/>
        </authorList>
    </citation>
    <scope>NUCLEOTIDE SEQUENCE [LARGE SCALE GENOMIC DNA]</scope>
    <source>
        <strain>DSM 273 / BCRC 81028 / 2530</strain>
    </source>
</reference>
<evidence type="ECO:0000255" key="1">
    <source>
        <dbReference type="HAMAP-Rule" id="MF_00009"/>
    </source>
</evidence>
<proteinExistence type="inferred from homology"/>